<reference key="1">
    <citation type="journal article" date="2002" name="J. Bacteriol.">
        <title>Whole-genome comparison of Mycobacterium tuberculosis clinical and laboratory strains.</title>
        <authorList>
            <person name="Fleischmann R.D."/>
            <person name="Alland D."/>
            <person name="Eisen J.A."/>
            <person name="Carpenter L."/>
            <person name="White O."/>
            <person name="Peterson J.D."/>
            <person name="DeBoy R.T."/>
            <person name="Dodson R.J."/>
            <person name="Gwinn M.L."/>
            <person name="Haft D.H."/>
            <person name="Hickey E.K."/>
            <person name="Kolonay J.F."/>
            <person name="Nelson W.C."/>
            <person name="Umayam L.A."/>
            <person name="Ermolaeva M.D."/>
            <person name="Salzberg S.L."/>
            <person name="Delcher A."/>
            <person name="Utterback T.R."/>
            <person name="Weidman J.F."/>
            <person name="Khouri H.M."/>
            <person name="Gill J."/>
            <person name="Mikula A."/>
            <person name="Bishai W."/>
            <person name="Jacobs W.R. Jr."/>
            <person name="Venter J.C."/>
            <person name="Fraser C.M."/>
        </authorList>
    </citation>
    <scope>NUCLEOTIDE SEQUENCE [LARGE SCALE GENOMIC DNA]</scope>
    <source>
        <strain>CDC 1551 / Oshkosh</strain>
    </source>
</reference>
<feature type="chain" id="PRO_0000427058" description="DNA primase">
    <location>
        <begin position="1"/>
        <end position="639"/>
    </location>
</feature>
<feature type="domain" description="Toprim" evidence="1">
    <location>
        <begin position="262"/>
        <end position="348"/>
    </location>
</feature>
<feature type="zinc finger region" description="CHC2-type" evidence="1">
    <location>
        <begin position="41"/>
        <end position="65"/>
    </location>
</feature>
<feature type="region of interest" description="Disordered" evidence="2">
    <location>
        <begin position="460"/>
        <end position="479"/>
    </location>
</feature>
<feature type="binding site" evidence="1">
    <location>
        <position position="268"/>
    </location>
    <ligand>
        <name>Mg(2+)</name>
        <dbReference type="ChEBI" id="CHEBI:18420"/>
        <label>1</label>
        <note>catalytic</note>
    </ligand>
</feature>
<feature type="binding site" evidence="1">
    <location>
        <position position="319"/>
    </location>
    <ligand>
        <name>Mg(2+)</name>
        <dbReference type="ChEBI" id="CHEBI:18420"/>
        <label>1</label>
        <note>catalytic</note>
    </ligand>
</feature>
<feature type="binding site" evidence="1">
    <location>
        <position position="319"/>
    </location>
    <ligand>
        <name>Mg(2+)</name>
        <dbReference type="ChEBI" id="CHEBI:18420"/>
        <label>2</label>
    </ligand>
</feature>
<feature type="binding site" evidence="1">
    <location>
        <position position="321"/>
    </location>
    <ligand>
        <name>Mg(2+)</name>
        <dbReference type="ChEBI" id="CHEBI:18420"/>
        <label>2</label>
    </ligand>
</feature>
<keyword id="KW-0235">DNA replication</keyword>
<keyword id="KW-0238">DNA-binding</keyword>
<keyword id="KW-0240">DNA-directed RNA polymerase</keyword>
<keyword id="KW-0460">Magnesium</keyword>
<keyword id="KW-0479">Metal-binding</keyword>
<keyword id="KW-0548">Nucleotidyltransferase</keyword>
<keyword id="KW-0639">Primosome</keyword>
<keyword id="KW-1185">Reference proteome</keyword>
<keyword id="KW-0804">Transcription</keyword>
<keyword id="KW-0808">Transferase</keyword>
<keyword id="KW-0862">Zinc</keyword>
<keyword id="KW-0863">Zinc-finger</keyword>
<name>DNAG_MYCTO</name>
<organism>
    <name type="scientific">Mycobacterium tuberculosis (strain CDC 1551 / Oshkosh)</name>
    <dbReference type="NCBI Taxonomy" id="83331"/>
    <lineage>
        <taxon>Bacteria</taxon>
        <taxon>Bacillati</taxon>
        <taxon>Actinomycetota</taxon>
        <taxon>Actinomycetes</taxon>
        <taxon>Mycobacteriales</taxon>
        <taxon>Mycobacteriaceae</taxon>
        <taxon>Mycobacterium</taxon>
        <taxon>Mycobacterium tuberculosis complex</taxon>
    </lineage>
</organism>
<accession>P9WNW0</accession>
<accession>L0TC89</accession>
<accession>P63962</accession>
<accession>P95239</accession>
<protein>
    <recommendedName>
        <fullName evidence="1">DNA primase</fullName>
        <ecNumber evidence="1">2.7.7.101</ecNumber>
    </recommendedName>
</protein>
<proteinExistence type="inferred from homology"/>
<sequence length="639" mass="69593">MSGRISDRDIAAIREGARIEDVVGDYVQLRRAGADSLKGLCPFHNEKSPSFHVRPNHGHFHCFGCGEGGDVYAFIQKIEHVSFVEAVELLADRIGHTISYTGAATSVQRDRGSRSRLLAANAAAAAFYAQALQSDEAAPARQYLTERSFDAAAARKFGCGFAPSGWDSLTKHLQRKGFEFEELEAAGLSRQGRHGPMDRFHRRLLWPIRTSAGEVVGFGARRLFDDDAMEAKYVNTPETLLYKKSSVMFGIDLAKRDIAKGHQAVVVEGYTDVMAMHLAGVTTAVASCGTAFGGEHLAMLRRLMMDDSFFRGELIYVFDGDEAGRAAALKAFDGEQKLAGQSFVAVAPDGMDPCDLRLKCGDAALRDLVARRTPLFEFAIRAAIAEMDLDSAEGRVAALRRCVPMVGQIKDPTLRDEYARQLAGWVGWADVAQVIGRVRGEAKRTKHPRLGRLGSTTIARAAQRPTAGPPTELAVRPDPRDPTLWPQREALKSALQYPALAGPVFDALTVEGFTHPEYAAVRAAIDTAGGTSAGLSGAQWLDMVRQQTTSTVTSALISELGVEAIQVDDDKLPRYIAGVLARLQEVWLGRQIAEVKSKLQRMSPIEQGDEYHALFGDLVAMEAYRRSLLEQASGDDLTA</sequence>
<dbReference type="EC" id="2.7.7.101" evidence="1"/>
<dbReference type="EMBL" id="AE000516">
    <property type="protein sequence ID" value="AAK46701.1"/>
    <property type="molecule type" value="Genomic_DNA"/>
</dbReference>
<dbReference type="PIR" id="H70661">
    <property type="entry name" value="H70661"/>
</dbReference>
<dbReference type="RefSeq" id="WP_003412049.1">
    <property type="nucleotide sequence ID" value="NZ_KK341227.1"/>
</dbReference>
<dbReference type="SMR" id="P9WNW0"/>
<dbReference type="BindingDB" id="P9WNW0"/>
<dbReference type="KEGG" id="mtc:MT2408"/>
<dbReference type="PATRIC" id="fig|83331.31.peg.2596"/>
<dbReference type="HOGENOM" id="CLU_013501_3_1_11"/>
<dbReference type="Proteomes" id="UP000001020">
    <property type="component" value="Chromosome"/>
</dbReference>
<dbReference type="GO" id="GO:0005737">
    <property type="term" value="C:cytoplasm"/>
    <property type="evidence" value="ECO:0007669"/>
    <property type="project" value="TreeGrafter"/>
</dbReference>
<dbReference type="GO" id="GO:0000428">
    <property type="term" value="C:DNA-directed RNA polymerase complex"/>
    <property type="evidence" value="ECO:0007669"/>
    <property type="project" value="UniProtKB-KW"/>
</dbReference>
<dbReference type="GO" id="GO:1990077">
    <property type="term" value="C:primosome complex"/>
    <property type="evidence" value="ECO:0007669"/>
    <property type="project" value="UniProtKB-KW"/>
</dbReference>
<dbReference type="GO" id="GO:0003677">
    <property type="term" value="F:DNA binding"/>
    <property type="evidence" value="ECO:0007669"/>
    <property type="project" value="UniProtKB-KW"/>
</dbReference>
<dbReference type="GO" id="GO:0003899">
    <property type="term" value="F:DNA-directed RNA polymerase activity"/>
    <property type="evidence" value="ECO:0000314"/>
    <property type="project" value="CACAO"/>
</dbReference>
<dbReference type="GO" id="GO:0008270">
    <property type="term" value="F:zinc ion binding"/>
    <property type="evidence" value="ECO:0007669"/>
    <property type="project" value="UniProtKB-UniRule"/>
</dbReference>
<dbReference type="GO" id="GO:0006269">
    <property type="term" value="P:DNA replication, synthesis of primer"/>
    <property type="evidence" value="ECO:0007669"/>
    <property type="project" value="UniProtKB-UniRule"/>
</dbReference>
<dbReference type="CDD" id="cd03364">
    <property type="entry name" value="TOPRIM_DnaG_primases"/>
    <property type="match status" value="1"/>
</dbReference>
<dbReference type="FunFam" id="3.40.1360.10:FF:000004">
    <property type="entry name" value="DNA primase"/>
    <property type="match status" value="1"/>
</dbReference>
<dbReference type="FunFam" id="3.90.580.10:FF:000001">
    <property type="entry name" value="DNA primase"/>
    <property type="match status" value="1"/>
</dbReference>
<dbReference type="FunFam" id="3.90.980.10:FF:000001">
    <property type="entry name" value="DNA primase"/>
    <property type="match status" value="1"/>
</dbReference>
<dbReference type="Gene3D" id="3.40.1360.10">
    <property type="match status" value="1"/>
</dbReference>
<dbReference type="Gene3D" id="3.90.980.10">
    <property type="entry name" value="DNA primase, catalytic core, N-terminal domain"/>
    <property type="match status" value="1"/>
</dbReference>
<dbReference type="Gene3D" id="3.90.580.10">
    <property type="entry name" value="Zinc finger, CHC2-type domain"/>
    <property type="match status" value="1"/>
</dbReference>
<dbReference type="HAMAP" id="MF_00974">
    <property type="entry name" value="DNA_primase_DnaG"/>
    <property type="match status" value="1"/>
</dbReference>
<dbReference type="InterPro" id="IPR037068">
    <property type="entry name" value="DNA_primase_core_N_sf"/>
</dbReference>
<dbReference type="InterPro" id="IPR019475">
    <property type="entry name" value="DNA_primase_DnaB-bd"/>
</dbReference>
<dbReference type="InterPro" id="IPR006295">
    <property type="entry name" value="DNA_primase_DnaG"/>
</dbReference>
<dbReference type="InterPro" id="IPR013173">
    <property type="entry name" value="DNA_primase_DnaG_DnaB-bd_dom"/>
</dbReference>
<dbReference type="InterPro" id="IPR036977">
    <property type="entry name" value="DNA_primase_Znf_CHC2"/>
</dbReference>
<dbReference type="InterPro" id="IPR030846">
    <property type="entry name" value="DnaG_bac"/>
</dbReference>
<dbReference type="InterPro" id="IPR013264">
    <property type="entry name" value="DNAG_N"/>
</dbReference>
<dbReference type="InterPro" id="IPR050219">
    <property type="entry name" value="DnaG_primase"/>
</dbReference>
<dbReference type="InterPro" id="IPR034151">
    <property type="entry name" value="TOPRIM_DnaG_bac"/>
</dbReference>
<dbReference type="InterPro" id="IPR006171">
    <property type="entry name" value="TOPRIM_dom"/>
</dbReference>
<dbReference type="InterPro" id="IPR002694">
    <property type="entry name" value="Znf_CHC2"/>
</dbReference>
<dbReference type="NCBIfam" id="TIGR01391">
    <property type="entry name" value="dnaG"/>
    <property type="match status" value="1"/>
</dbReference>
<dbReference type="PANTHER" id="PTHR30313">
    <property type="entry name" value="DNA PRIMASE"/>
    <property type="match status" value="1"/>
</dbReference>
<dbReference type="PANTHER" id="PTHR30313:SF2">
    <property type="entry name" value="DNA PRIMASE"/>
    <property type="match status" value="1"/>
</dbReference>
<dbReference type="Pfam" id="PF10410">
    <property type="entry name" value="DnaB_bind"/>
    <property type="match status" value="1"/>
</dbReference>
<dbReference type="Pfam" id="PF08278">
    <property type="entry name" value="DnaG_DnaB_bind"/>
    <property type="match status" value="1"/>
</dbReference>
<dbReference type="Pfam" id="PF08275">
    <property type="entry name" value="DNAG_N"/>
    <property type="match status" value="1"/>
</dbReference>
<dbReference type="Pfam" id="PF13662">
    <property type="entry name" value="Toprim_4"/>
    <property type="match status" value="1"/>
</dbReference>
<dbReference type="Pfam" id="PF01807">
    <property type="entry name" value="Zn_ribbon_DnaG"/>
    <property type="match status" value="1"/>
</dbReference>
<dbReference type="PIRSF" id="PIRSF002811">
    <property type="entry name" value="DnaG"/>
    <property type="match status" value="1"/>
</dbReference>
<dbReference type="SMART" id="SM00766">
    <property type="entry name" value="DnaG_DnaB_bind"/>
    <property type="match status" value="1"/>
</dbReference>
<dbReference type="SMART" id="SM00493">
    <property type="entry name" value="TOPRIM"/>
    <property type="match status" value="1"/>
</dbReference>
<dbReference type="SMART" id="SM00400">
    <property type="entry name" value="ZnF_CHCC"/>
    <property type="match status" value="1"/>
</dbReference>
<dbReference type="SUPFAM" id="SSF56731">
    <property type="entry name" value="DNA primase core"/>
    <property type="match status" value="1"/>
</dbReference>
<dbReference type="SUPFAM" id="SSF57783">
    <property type="entry name" value="Zinc beta-ribbon"/>
    <property type="match status" value="1"/>
</dbReference>
<dbReference type="PROSITE" id="PS50880">
    <property type="entry name" value="TOPRIM"/>
    <property type="match status" value="1"/>
</dbReference>
<evidence type="ECO:0000255" key="1">
    <source>
        <dbReference type="HAMAP-Rule" id="MF_00974"/>
    </source>
</evidence>
<evidence type="ECO:0000256" key="2">
    <source>
        <dbReference type="SAM" id="MobiDB-lite"/>
    </source>
</evidence>
<gene>
    <name evidence="1" type="primary">dnaG</name>
    <name type="ordered locus">MT2408</name>
</gene>
<comment type="function">
    <text evidence="1">RNA polymerase that catalyzes the synthesis of short RNA molecules used as primers for DNA polymerase during DNA replication.</text>
</comment>
<comment type="catalytic activity">
    <reaction evidence="1">
        <text>ssDNA + n NTP = ssDNA/pppN(pN)n-1 hybrid + (n-1) diphosphate.</text>
        <dbReference type="EC" id="2.7.7.101"/>
    </reaction>
</comment>
<comment type="cofactor">
    <cofactor evidence="1">
        <name>Zn(2+)</name>
        <dbReference type="ChEBI" id="CHEBI:29105"/>
    </cofactor>
    <text evidence="1">Binds 1 zinc ion per monomer.</text>
</comment>
<comment type="cofactor">
    <cofactor evidence="1">
        <name>Mg(2+)</name>
        <dbReference type="ChEBI" id="CHEBI:18420"/>
    </cofactor>
    <text evidence="1">Binds two Mg(2+) per subunit.</text>
</comment>
<comment type="subunit">
    <text evidence="1">Monomer. Interacts with DnaB.</text>
</comment>
<comment type="domain">
    <text evidence="1">Contains an N-terminal zinc-binding domain, a central core domain that contains the primase activity, and a C-terminal DnaB-binding domain.</text>
</comment>
<comment type="similarity">
    <text evidence="1">Belongs to the DnaG primase family.</text>
</comment>